<name>RL24_CLOB6</name>
<proteinExistence type="inferred from homology"/>
<organism>
    <name type="scientific">Clostridium botulinum (strain 657 / Type Ba4)</name>
    <dbReference type="NCBI Taxonomy" id="515621"/>
    <lineage>
        <taxon>Bacteria</taxon>
        <taxon>Bacillati</taxon>
        <taxon>Bacillota</taxon>
        <taxon>Clostridia</taxon>
        <taxon>Eubacteriales</taxon>
        <taxon>Clostridiaceae</taxon>
        <taxon>Clostridium</taxon>
    </lineage>
</organism>
<gene>
    <name evidence="1" type="primary">rplX</name>
    <name type="ordered locus">CLJ_B3778</name>
</gene>
<comment type="function">
    <text evidence="1">One of two assembly initiator proteins, it binds directly to the 5'-end of the 23S rRNA, where it nucleates assembly of the 50S subunit.</text>
</comment>
<comment type="function">
    <text evidence="1">One of the proteins that surrounds the polypeptide exit tunnel on the outside of the subunit.</text>
</comment>
<comment type="subunit">
    <text evidence="1">Part of the 50S ribosomal subunit.</text>
</comment>
<comment type="similarity">
    <text evidence="1">Belongs to the universal ribosomal protein uL24 family.</text>
</comment>
<feature type="chain" id="PRO_1000214535" description="Large ribosomal subunit protein uL24">
    <location>
        <begin position="1"/>
        <end position="105"/>
    </location>
</feature>
<keyword id="KW-0687">Ribonucleoprotein</keyword>
<keyword id="KW-0689">Ribosomal protein</keyword>
<keyword id="KW-0694">RNA-binding</keyword>
<keyword id="KW-0699">rRNA-binding</keyword>
<accession>C3KVP0</accession>
<reference key="1">
    <citation type="submission" date="2008-05" db="EMBL/GenBank/DDBJ databases">
        <title>Genome sequence of Clostridium botulinum Ba4 strain 657.</title>
        <authorList>
            <person name="Shrivastava S."/>
            <person name="Brown J.L."/>
            <person name="Bruce D."/>
            <person name="Detter C."/>
            <person name="Munk C."/>
            <person name="Smith L.A."/>
            <person name="Smith T.J."/>
            <person name="Sutton G."/>
            <person name="Brettin T.S."/>
        </authorList>
    </citation>
    <scope>NUCLEOTIDE SEQUENCE [LARGE SCALE GENOMIC DNA]</scope>
    <source>
        <strain>657 / Type Ba4</strain>
    </source>
</reference>
<evidence type="ECO:0000255" key="1">
    <source>
        <dbReference type="HAMAP-Rule" id="MF_01326"/>
    </source>
</evidence>
<evidence type="ECO:0000305" key="2"/>
<dbReference type="EMBL" id="CP001083">
    <property type="protein sequence ID" value="ACQ52309.1"/>
    <property type="molecule type" value="Genomic_DNA"/>
</dbReference>
<dbReference type="RefSeq" id="WP_003360199.1">
    <property type="nucleotide sequence ID" value="NC_012658.1"/>
</dbReference>
<dbReference type="SMR" id="C3KVP0"/>
<dbReference type="KEGG" id="cbi:CLJ_B3778"/>
<dbReference type="HOGENOM" id="CLU_093315_2_3_9"/>
<dbReference type="Proteomes" id="UP000002333">
    <property type="component" value="Chromosome"/>
</dbReference>
<dbReference type="GO" id="GO:1990904">
    <property type="term" value="C:ribonucleoprotein complex"/>
    <property type="evidence" value="ECO:0007669"/>
    <property type="project" value="UniProtKB-KW"/>
</dbReference>
<dbReference type="GO" id="GO:0005840">
    <property type="term" value="C:ribosome"/>
    <property type="evidence" value="ECO:0007669"/>
    <property type="project" value="UniProtKB-KW"/>
</dbReference>
<dbReference type="GO" id="GO:0019843">
    <property type="term" value="F:rRNA binding"/>
    <property type="evidence" value="ECO:0007669"/>
    <property type="project" value="UniProtKB-UniRule"/>
</dbReference>
<dbReference type="GO" id="GO:0003735">
    <property type="term" value="F:structural constituent of ribosome"/>
    <property type="evidence" value="ECO:0007669"/>
    <property type="project" value="InterPro"/>
</dbReference>
<dbReference type="GO" id="GO:0006412">
    <property type="term" value="P:translation"/>
    <property type="evidence" value="ECO:0007669"/>
    <property type="project" value="UniProtKB-UniRule"/>
</dbReference>
<dbReference type="CDD" id="cd06089">
    <property type="entry name" value="KOW_RPL26"/>
    <property type="match status" value="1"/>
</dbReference>
<dbReference type="FunFam" id="2.30.30.30:FF:000004">
    <property type="entry name" value="50S ribosomal protein L24"/>
    <property type="match status" value="1"/>
</dbReference>
<dbReference type="Gene3D" id="2.30.30.30">
    <property type="match status" value="1"/>
</dbReference>
<dbReference type="HAMAP" id="MF_01326_B">
    <property type="entry name" value="Ribosomal_uL24_B"/>
    <property type="match status" value="1"/>
</dbReference>
<dbReference type="InterPro" id="IPR005824">
    <property type="entry name" value="KOW"/>
</dbReference>
<dbReference type="InterPro" id="IPR014722">
    <property type="entry name" value="Rib_uL2_dom2"/>
</dbReference>
<dbReference type="InterPro" id="IPR003256">
    <property type="entry name" value="Ribosomal_uL24"/>
</dbReference>
<dbReference type="InterPro" id="IPR041988">
    <property type="entry name" value="Ribosomal_uL24_KOW"/>
</dbReference>
<dbReference type="InterPro" id="IPR008991">
    <property type="entry name" value="Translation_prot_SH3-like_sf"/>
</dbReference>
<dbReference type="NCBIfam" id="TIGR01079">
    <property type="entry name" value="rplX_bact"/>
    <property type="match status" value="1"/>
</dbReference>
<dbReference type="PANTHER" id="PTHR12903">
    <property type="entry name" value="MITOCHONDRIAL RIBOSOMAL PROTEIN L24"/>
    <property type="match status" value="1"/>
</dbReference>
<dbReference type="Pfam" id="PF00467">
    <property type="entry name" value="KOW"/>
    <property type="match status" value="1"/>
</dbReference>
<dbReference type="Pfam" id="PF17136">
    <property type="entry name" value="ribosomal_L24"/>
    <property type="match status" value="1"/>
</dbReference>
<dbReference type="SMART" id="SM00739">
    <property type="entry name" value="KOW"/>
    <property type="match status" value="1"/>
</dbReference>
<dbReference type="SUPFAM" id="SSF50104">
    <property type="entry name" value="Translation proteins SH3-like domain"/>
    <property type="match status" value="1"/>
</dbReference>
<protein>
    <recommendedName>
        <fullName evidence="1">Large ribosomal subunit protein uL24</fullName>
    </recommendedName>
    <alternativeName>
        <fullName evidence="2">50S ribosomal protein L24</fullName>
    </alternativeName>
</protein>
<sequence>MSKIHVRKKDTVVVISGKDKGKIGEVLSVLPKKGKVIVKDVNVVTKHQKPNRENMQGGIIHKEAPIFSSKVMLYCDKCKSATRISNKILEDGTKVRICKKCGETF</sequence>